<name>POPA_AMABI</name>
<evidence type="ECO:0000250" key="1">
    <source>
        <dbReference type="UniProtKB" id="H2E7Q7"/>
    </source>
</evidence>
<evidence type="ECO:0000250" key="2">
    <source>
        <dbReference type="UniProtKB" id="P48147"/>
    </source>
</evidence>
<evidence type="ECO:0000255" key="3">
    <source>
        <dbReference type="PROSITE-ProRule" id="PRU10084"/>
    </source>
</evidence>
<evidence type="ECO:0000303" key="4">
    <source>
    </source>
</evidence>
<evidence type="ECO:0000305" key="5"/>
<evidence type="ECO:0000305" key="6">
    <source>
    </source>
</evidence>
<comment type="function">
    <text evidence="1">Housekeeping prolyl oligopeptidase (POP) that behaves like a conventional POP by cleaving peptide bonds on the C-terminal side of prolyl residues within peptides that are up to approximately 30 amino acids long (By similarity).</text>
</comment>
<comment type="catalytic activity">
    <reaction evidence="5">
        <text>Hydrolysis of Pro-|-Xaa &gt;&gt; Ala-|-Xaa in oligopeptides.</text>
        <dbReference type="EC" id="3.4.21.26"/>
    </reaction>
</comment>
<comment type="subunit">
    <text evidence="2">Monomer.</text>
</comment>
<comment type="similarity">
    <text evidence="5">Belongs to the peptidase S9A family.</text>
</comment>
<sequence>MHRFLQPVRERLRSALARYFGSRIMSSTQWTPNMYPSARRSDHIDTYRSETRGEVKVPDPYHWLEEYSEETDKWTSDQEEFTRTYLDSNPDRKKLEDAFRKSMDYPKFSAPFLNDDKRWYWFYNTGLQAQTVICRSKDETLPDFSESDYVGETFFDPNLLSSDGTASLSMYDFSHCGKYFAYGISLSGSDFSTIYVRSTSSPLAPGNNSIRNDDGRLPDELRYVKFSSISWTKDSKGFFYQRYPGTGTVNGQNGIQTQGDRDAMIYYHRIGTSQSDDILVHEDQEHPDWVFGAEVTEDGKYVALYTMKDTSRKNLLWIADLGQNEVGRNMKWNKICNVFDSEYDLIGNDGSLLYIRTNKAAPQYKIVTLDIEKPELGFKEFIPEDPKAYLSQVKIFNKDRLALVYKRNVIGELYVYNNTGSRLMRLARDFVGSMTVTARETEPWFFATLTGFNTPGIVCRYNIQRPEEQRWSVYRTAKVKGLNPNDFEARQVWYDSYDGTKIPMFIVRHKNTQFNGTAPAIQYGYGGFNISINPFFSPTILTFLQKYGAILAVPNIRGGGEFGETWHDAGIREKRANVYDDFIAATQFLVKNKYAAGGKVAINGGSNGGLLVAACVNRAREGTFGAAIAEVGVLDLLKFPKFTIGKAWISDYGDPEDPRDFDYIYTHSPLHNIPKNMVLPPTMLLTADHDDRVVPMHSFKYAAMLQYTLPHNRHPLLLRVDKKAGHGGGKSTEKRLQEAADKWGFAAQSMGLAWKDRQANL</sequence>
<feature type="chain" id="PRO_0000443714" description="Prolyl oligopeptidase A">
    <location>
        <begin position="1"/>
        <end position="761"/>
    </location>
</feature>
<feature type="active site" description="Charge relay system" evidence="3">
    <location>
        <position position="606"/>
    </location>
</feature>
<feature type="active site" description="Charge relay system" evidence="3">
    <location>
        <position position="690"/>
    </location>
</feature>
<feature type="active site" description="Charge relay system" evidence="3">
    <location>
        <position position="726"/>
    </location>
</feature>
<accession>E2JFG1</accession>
<proteinExistence type="evidence at transcript level"/>
<protein>
    <recommendedName>
        <fullName evidence="4">Prolyl oligopeptidase A</fullName>
        <ecNumber evidence="6">3.4.21.26</ecNumber>
    </recommendedName>
</protein>
<gene>
    <name evidence="4" type="primary">POPA</name>
</gene>
<dbReference type="EC" id="3.4.21.26" evidence="6"/>
<dbReference type="EMBL" id="HQ225840">
    <property type="protein sequence ID" value="ADN19204.1"/>
    <property type="molecule type" value="mRNA"/>
</dbReference>
<dbReference type="SMR" id="E2JFG1"/>
<dbReference type="ESTHER" id="amabi-popa">
    <property type="family name" value="S9N_PPCE_Peptidase_S9"/>
</dbReference>
<dbReference type="BRENDA" id="3.4.21.26">
    <property type="organism ID" value="12947"/>
</dbReference>
<dbReference type="GO" id="GO:0005829">
    <property type="term" value="C:cytosol"/>
    <property type="evidence" value="ECO:0007669"/>
    <property type="project" value="TreeGrafter"/>
</dbReference>
<dbReference type="GO" id="GO:0070012">
    <property type="term" value="F:oligopeptidase activity"/>
    <property type="evidence" value="ECO:0007669"/>
    <property type="project" value="TreeGrafter"/>
</dbReference>
<dbReference type="GO" id="GO:0004252">
    <property type="term" value="F:serine-type endopeptidase activity"/>
    <property type="evidence" value="ECO:0007669"/>
    <property type="project" value="UniProtKB-EC"/>
</dbReference>
<dbReference type="GO" id="GO:0006508">
    <property type="term" value="P:proteolysis"/>
    <property type="evidence" value="ECO:0007669"/>
    <property type="project" value="UniProtKB-KW"/>
</dbReference>
<dbReference type="FunFam" id="2.130.10.120:FF:000001">
    <property type="entry name" value="Prolyl endopeptidase"/>
    <property type="match status" value="1"/>
</dbReference>
<dbReference type="FunFam" id="3.40.50.1820:FF:000005">
    <property type="entry name" value="Prolyl endopeptidase"/>
    <property type="match status" value="1"/>
</dbReference>
<dbReference type="Gene3D" id="3.40.50.1820">
    <property type="entry name" value="alpha/beta hydrolase"/>
    <property type="match status" value="1"/>
</dbReference>
<dbReference type="Gene3D" id="2.130.10.120">
    <property type="entry name" value="Prolyl oligopeptidase, N-terminal domain"/>
    <property type="match status" value="1"/>
</dbReference>
<dbReference type="InterPro" id="IPR029058">
    <property type="entry name" value="AB_hydrolase_fold"/>
</dbReference>
<dbReference type="InterPro" id="IPR002471">
    <property type="entry name" value="Pept_S9_AS"/>
</dbReference>
<dbReference type="InterPro" id="IPR023302">
    <property type="entry name" value="Pept_S9A_N"/>
</dbReference>
<dbReference type="InterPro" id="IPR001375">
    <property type="entry name" value="Peptidase_S9_cat"/>
</dbReference>
<dbReference type="InterPro" id="IPR002470">
    <property type="entry name" value="Peptidase_S9A"/>
</dbReference>
<dbReference type="InterPro" id="IPR051167">
    <property type="entry name" value="Prolyl_oligopep/macrocyclase"/>
</dbReference>
<dbReference type="PANTHER" id="PTHR42881">
    <property type="entry name" value="PROLYL ENDOPEPTIDASE"/>
    <property type="match status" value="1"/>
</dbReference>
<dbReference type="PANTHER" id="PTHR42881:SF2">
    <property type="entry name" value="PROLYL ENDOPEPTIDASE"/>
    <property type="match status" value="1"/>
</dbReference>
<dbReference type="Pfam" id="PF00326">
    <property type="entry name" value="Peptidase_S9"/>
    <property type="match status" value="1"/>
</dbReference>
<dbReference type="Pfam" id="PF02897">
    <property type="entry name" value="Peptidase_S9_N"/>
    <property type="match status" value="1"/>
</dbReference>
<dbReference type="PRINTS" id="PR00862">
    <property type="entry name" value="PROLIGOPTASE"/>
</dbReference>
<dbReference type="SUPFAM" id="SSF53474">
    <property type="entry name" value="alpha/beta-Hydrolases"/>
    <property type="match status" value="1"/>
</dbReference>
<dbReference type="SUPFAM" id="SSF50993">
    <property type="entry name" value="Peptidase/esterase 'gauge' domain"/>
    <property type="match status" value="1"/>
</dbReference>
<dbReference type="PROSITE" id="PS00708">
    <property type="entry name" value="PRO_ENDOPEP_SER"/>
    <property type="match status" value="1"/>
</dbReference>
<keyword id="KW-0378">Hydrolase</keyword>
<keyword id="KW-0645">Protease</keyword>
<keyword id="KW-0720">Serine protease</keyword>
<organism>
    <name type="scientific">Amanita bisporigera</name>
    <name type="common">Destroying angel</name>
    <dbReference type="NCBI Taxonomy" id="87325"/>
    <lineage>
        <taxon>Eukaryota</taxon>
        <taxon>Fungi</taxon>
        <taxon>Dikarya</taxon>
        <taxon>Basidiomycota</taxon>
        <taxon>Agaricomycotina</taxon>
        <taxon>Agaricomycetes</taxon>
        <taxon>Agaricomycetidae</taxon>
        <taxon>Agaricales</taxon>
        <taxon>Pluteineae</taxon>
        <taxon>Amanitaceae</taxon>
        <taxon>Amanita</taxon>
    </lineage>
</organism>
<reference key="1">
    <citation type="journal article" date="2010" name="Eukaryot. Cell">
        <title>Colocalization of amanitin and a candidate toxin-processing prolyl oligopeptidase in Amanita basidiocarps.</title>
        <authorList>
            <person name="Luo H."/>
            <person name="Hallen-Adams H.E."/>
            <person name="Scott-Craig J.S."/>
            <person name="Walton J.D."/>
        </authorList>
    </citation>
    <scope>NUCLEOTIDE SEQUENCE [MRNA]</scope>
</reference>